<sequence length="188" mass="21135">MPIKSDKWIRRMAESHQLIYPFEPKQVRETPSGKVISYGTSSYGYDVRCADEFKIFTNINASIVDPKNFDPNGFIDLKANVCIIPPNSFVLARTVEYFKIPRNILTICLGKSTYARCGIIVNVTPLEPEWEGHVTLEFSNTTNLPAKIYANEGVAQMLFLESDEVCDISYKDRGGKYQGQKGVTLPVA</sequence>
<keyword id="KW-0378">Hydrolase</keyword>
<keyword id="KW-0546">Nucleotide metabolism</keyword>
<keyword id="KW-0547">Nucleotide-binding</keyword>
<feature type="chain" id="PRO_1000076616" description="dCTP deaminase">
    <location>
        <begin position="1"/>
        <end position="188"/>
    </location>
</feature>
<feature type="active site" description="Proton donor/acceptor" evidence="1">
    <location>
        <position position="137"/>
    </location>
</feature>
<feature type="binding site" evidence="1">
    <location>
        <begin position="111"/>
        <end position="116"/>
    </location>
    <ligand>
        <name>dCTP</name>
        <dbReference type="ChEBI" id="CHEBI:61481"/>
    </ligand>
</feature>
<feature type="binding site" evidence="1">
    <location>
        <begin position="135"/>
        <end position="137"/>
    </location>
    <ligand>
        <name>dCTP</name>
        <dbReference type="ChEBI" id="CHEBI:61481"/>
    </ligand>
</feature>
<feature type="binding site" evidence="1">
    <location>
        <position position="156"/>
    </location>
    <ligand>
        <name>dCTP</name>
        <dbReference type="ChEBI" id="CHEBI:61481"/>
    </ligand>
</feature>
<feature type="binding site" evidence="1">
    <location>
        <position position="170"/>
    </location>
    <ligand>
        <name>dCTP</name>
        <dbReference type="ChEBI" id="CHEBI:61481"/>
    </ligand>
</feature>
<feature type="binding site" evidence="1">
    <location>
        <position position="180"/>
    </location>
    <ligand>
        <name>dCTP</name>
        <dbReference type="ChEBI" id="CHEBI:61481"/>
    </ligand>
</feature>
<comment type="function">
    <text evidence="1">Catalyzes the deamination of dCTP to dUTP.</text>
</comment>
<comment type="catalytic activity">
    <reaction evidence="1">
        <text>dCTP + H2O + H(+) = dUTP + NH4(+)</text>
        <dbReference type="Rhea" id="RHEA:22680"/>
        <dbReference type="ChEBI" id="CHEBI:15377"/>
        <dbReference type="ChEBI" id="CHEBI:15378"/>
        <dbReference type="ChEBI" id="CHEBI:28938"/>
        <dbReference type="ChEBI" id="CHEBI:61481"/>
        <dbReference type="ChEBI" id="CHEBI:61555"/>
        <dbReference type="EC" id="3.5.4.13"/>
    </reaction>
</comment>
<comment type="pathway">
    <text evidence="1">Pyrimidine metabolism; dUMP biosynthesis; dUMP from dCTP (dUTP route): step 1/2.</text>
</comment>
<comment type="subunit">
    <text evidence="1">Homotrimer.</text>
</comment>
<comment type="similarity">
    <text evidence="1">Belongs to the dCTP deaminase family.</text>
</comment>
<reference key="1">
    <citation type="journal article" date="2009" name="Infect. Immun.">
        <title>Comparative genomics reveal extensive transposon-mediated genomic plasticity and diversity among potential effector proteins within the genus Coxiella.</title>
        <authorList>
            <person name="Beare P.A."/>
            <person name="Unsworth N."/>
            <person name="Andoh M."/>
            <person name="Voth D.E."/>
            <person name="Omsland A."/>
            <person name="Gilk S.D."/>
            <person name="Williams K.P."/>
            <person name="Sobral B.W."/>
            <person name="Kupko J.J. III"/>
            <person name="Porcella S.F."/>
            <person name="Samuel J.E."/>
            <person name="Heinzen R.A."/>
        </authorList>
    </citation>
    <scope>NUCLEOTIDE SEQUENCE [LARGE SCALE GENOMIC DNA]</scope>
    <source>
        <strain>Dugway 5J108-111</strain>
    </source>
</reference>
<proteinExistence type="inferred from homology"/>
<gene>
    <name evidence="1" type="primary">dcd</name>
    <name type="ordered locus">CBUD_0313</name>
</gene>
<dbReference type="EC" id="3.5.4.13" evidence="1"/>
<dbReference type="EMBL" id="CP000733">
    <property type="protein sequence ID" value="ABS77254.1"/>
    <property type="molecule type" value="Genomic_DNA"/>
</dbReference>
<dbReference type="RefSeq" id="WP_005770557.1">
    <property type="nucleotide sequence ID" value="NC_009727.1"/>
</dbReference>
<dbReference type="SMR" id="A9KDG3"/>
<dbReference type="KEGG" id="cbd:CBUD_0313"/>
<dbReference type="HOGENOM" id="CLU_087476_4_0_6"/>
<dbReference type="UniPathway" id="UPA00610">
    <property type="reaction ID" value="UER00665"/>
</dbReference>
<dbReference type="Proteomes" id="UP000008555">
    <property type="component" value="Chromosome"/>
</dbReference>
<dbReference type="GO" id="GO:0008829">
    <property type="term" value="F:dCTP deaminase activity"/>
    <property type="evidence" value="ECO:0007669"/>
    <property type="project" value="UniProtKB-UniRule"/>
</dbReference>
<dbReference type="GO" id="GO:0000166">
    <property type="term" value="F:nucleotide binding"/>
    <property type="evidence" value="ECO:0007669"/>
    <property type="project" value="UniProtKB-KW"/>
</dbReference>
<dbReference type="GO" id="GO:0006226">
    <property type="term" value="P:dUMP biosynthetic process"/>
    <property type="evidence" value="ECO:0007669"/>
    <property type="project" value="UniProtKB-UniPathway"/>
</dbReference>
<dbReference type="GO" id="GO:0006229">
    <property type="term" value="P:dUTP biosynthetic process"/>
    <property type="evidence" value="ECO:0007669"/>
    <property type="project" value="UniProtKB-UniRule"/>
</dbReference>
<dbReference type="GO" id="GO:0015949">
    <property type="term" value="P:nucleobase-containing small molecule interconversion"/>
    <property type="evidence" value="ECO:0007669"/>
    <property type="project" value="TreeGrafter"/>
</dbReference>
<dbReference type="CDD" id="cd07557">
    <property type="entry name" value="trimeric_dUTPase"/>
    <property type="match status" value="1"/>
</dbReference>
<dbReference type="FunFam" id="2.70.40.10:FF:000001">
    <property type="entry name" value="dCTP deaminase"/>
    <property type="match status" value="1"/>
</dbReference>
<dbReference type="Gene3D" id="2.70.40.10">
    <property type="match status" value="1"/>
</dbReference>
<dbReference type="HAMAP" id="MF_00146">
    <property type="entry name" value="dCTP_deaminase"/>
    <property type="match status" value="1"/>
</dbReference>
<dbReference type="InterPro" id="IPR011962">
    <property type="entry name" value="dCTP_deaminase"/>
</dbReference>
<dbReference type="InterPro" id="IPR036157">
    <property type="entry name" value="dUTPase-like_sf"/>
</dbReference>
<dbReference type="InterPro" id="IPR033704">
    <property type="entry name" value="dUTPase_trimeric"/>
</dbReference>
<dbReference type="NCBIfam" id="TIGR02274">
    <property type="entry name" value="dCTP_deam"/>
    <property type="match status" value="1"/>
</dbReference>
<dbReference type="PANTHER" id="PTHR42680">
    <property type="entry name" value="DCTP DEAMINASE"/>
    <property type="match status" value="1"/>
</dbReference>
<dbReference type="PANTHER" id="PTHR42680:SF3">
    <property type="entry name" value="DCTP DEAMINASE"/>
    <property type="match status" value="1"/>
</dbReference>
<dbReference type="Pfam" id="PF22769">
    <property type="entry name" value="DCD"/>
    <property type="match status" value="1"/>
</dbReference>
<dbReference type="SUPFAM" id="SSF51283">
    <property type="entry name" value="dUTPase-like"/>
    <property type="match status" value="1"/>
</dbReference>
<name>DCD_COXBN</name>
<organism>
    <name type="scientific">Coxiella burnetii (strain Dugway 5J108-111)</name>
    <dbReference type="NCBI Taxonomy" id="434922"/>
    <lineage>
        <taxon>Bacteria</taxon>
        <taxon>Pseudomonadati</taxon>
        <taxon>Pseudomonadota</taxon>
        <taxon>Gammaproteobacteria</taxon>
        <taxon>Legionellales</taxon>
        <taxon>Coxiellaceae</taxon>
        <taxon>Coxiella</taxon>
    </lineage>
</organism>
<evidence type="ECO:0000255" key="1">
    <source>
        <dbReference type="HAMAP-Rule" id="MF_00146"/>
    </source>
</evidence>
<protein>
    <recommendedName>
        <fullName evidence="1">dCTP deaminase</fullName>
        <ecNumber evidence="1">3.5.4.13</ecNumber>
    </recommendedName>
    <alternativeName>
        <fullName evidence="1">Deoxycytidine triphosphate deaminase</fullName>
    </alternativeName>
</protein>
<accession>A9KDG3</accession>